<keyword id="KW-0408">Iron</keyword>
<keyword id="KW-0436">Ligase</keyword>
<keyword id="KW-0472">Membrane</keyword>
<keyword id="KW-0479">Metal-binding</keyword>
<keyword id="KW-0539">Nucleus</keyword>
<keyword id="KW-1185">Reference proteome</keyword>
<keyword id="KW-0812">Transmembrane</keyword>
<keyword id="KW-1133">Transmembrane helix</keyword>
<keyword id="KW-0833">Ubl conjugation pathway</keyword>
<keyword id="KW-0862">Zinc</keyword>
<keyword id="KW-0863">Zinc-finger</keyword>
<sequence length="1254" mass="141467">MATPLPDFETARGGGAVASSSTTVLPSSVSSSSSSSRPLPVANSFSDDAEEISPILIFLFFHKAVCSELEALHRLALEFATGHHVDLRLLRERYRFLRSIYKHHCNAEDEVIFSALDIRVKNVAQTYSLEHKGESNLFDHLFELLNSATETDESYRRELARSTGALQTSVSQHLAKEQKQVFPLLIEKFKYEEQAYIVWRFLCSIPVNMLAVFLPWISSSISVDESKEMQTCLKKIVPGEKLLQQVIFTWLGGKSNTVASCRIEDSMFQCCLDSSSSMLPCKASREQCACEGSKIGKRKYPELTNFGSSDTLHPVDEIKLWHKSINKEMKEIADEARKIQLSGDFSDLSAFDERLQYIAEVCIFHSLAEDKIIFPAVDGEFSFSEEHDEEENQFNEFRCLIENIKSAGASSTSAAEFYTKLCSHADQIMETIQRHFHNEEIQVLPLARKNFSFKRQQELLYQSLCIMPLRLIERVLPWLTASLTEDEAKNFLKNLQAGAPKSDVALVTLFSGWACKGRKAGECLSPNGNGLCPVKTLSNIKEVNLQSCNACASVPCTSRSTKSCCQHQDKRPAKRTAVLSCEKKTTPHSTEVANGCKPSGNGRSCCVPDLGVNNNCLELGSLPAAKAMRSSSLNSAAPALNSSLFIWEMDSNSFGTGHAERPVATIFKFHKAISKDLEFLDVESGKLIDCDGTFIRQFIGRFHLLWGFYKAHSNAEDDILFPALESKETLHNVSHSYTLDHKQEEKLFGDIYSVLTELSILHEKLQSDSMMEDIAQTDTVRTDIDNGDCNKKYNELATKLQGMCKSIKITLDQHIFLEELELWPLFDKHFSIQEQDKIVGRIIGTTGAEVLQSMLPWVTSALSEDEQNRMMDTWKQATKNTMFDEWLNECWKGSPDSSSTETSKPSPQKDNDHQEILDQSGELFKPGWKDIFRMNQNELEAEIRKVYQDSTLDPRRKDYLVQNWRTSRWIAAQQKLPKEAETAVNGDVELGCSPSFRDPEKQIYGCEHYKRNCKLRAACCDQLFTCRFCHDKVSDHSMDRKLVTEMLCMRCLKVQPVGPICTTPSCDGFPMAKHYCSICKLFDDERAVYHCPFCNLCRVGEGLGIDFFHCMTCNCCLGMKLVNHKCLEKSLETNCPICCEFLFTSSEAVRALPCGHYMHSACFQAYTCSHYTCPICGKSLGDMAVYFGMLDALLAAEELPEEYKNRCQDILCNDCERKGTTRFHWLYHKCGSCGSYNTRVIKSETIPPDCSTSS</sequence>
<dbReference type="EMBL" id="AP000414">
    <property type="protein sequence ID" value="BAB01179.1"/>
    <property type="status" value="ALT_SEQ"/>
    <property type="molecule type" value="Genomic_DNA"/>
</dbReference>
<dbReference type="EMBL" id="CP002686">
    <property type="protein sequence ID" value="AEE76077.1"/>
    <property type="molecule type" value="Genomic_DNA"/>
</dbReference>
<dbReference type="EMBL" id="AY094471">
    <property type="protein sequence ID" value="AAM19839.1"/>
    <property type="molecule type" value="mRNA"/>
</dbReference>
<dbReference type="EMBL" id="BT005819">
    <property type="protein sequence ID" value="AAO64754.1"/>
    <property type="molecule type" value="mRNA"/>
</dbReference>
<dbReference type="EMBL" id="AK230391">
    <property type="protein sequence ID" value="BAF02189.1"/>
    <property type="molecule type" value="mRNA"/>
</dbReference>
<dbReference type="RefSeq" id="NP_188457.1">
    <property type="nucleotide sequence ID" value="NM_112713.4"/>
</dbReference>
<dbReference type="SMR" id="Q8LPQ5"/>
<dbReference type="FunCoup" id="Q8LPQ5">
    <property type="interactions" value="240"/>
</dbReference>
<dbReference type="STRING" id="3702.Q8LPQ5"/>
<dbReference type="PaxDb" id="3702-AT3G18290.1"/>
<dbReference type="ProteomicsDB" id="240292"/>
<dbReference type="EnsemblPlants" id="AT3G18290.1">
    <property type="protein sequence ID" value="AT3G18290.1"/>
    <property type="gene ID" value="AT3G18290"/>
</dbReference>
<dbReference type="GeneID" id="821357"/>
<dbReference type="Gramene" id="AT3G18290.1">
    <property type="protein sequence ID" value="AT3G18290.1"/>
    <property type="gene ID" value="AT3G18290"/>
</dbReference>
<dbReference type="KEGG" id="ath:AT3G18290"/>
<dbReference type="Araport" id="AT3G18290"/>
<dbReference type="TAIR" id="AT3G18290">
    <property type="gene designation" value="BTS"/>
</dbReference>
<dbReference type="eggNOG" id="KOG1940">
    <property type="taxonomic scope" value="Eukaryota"/>
</dbReference>
<dbReference type="HOGENOM" id="CLU_003967_0_0_1"/>
<dbReference type="InParanoid" id="Q8LPQ5"/>
<dbReference type="OMA" id="CITPSCS"/>
<dbReference type="PhylomeDB" id="Q8LPQ5"/>
<dbReference type="UniPathway" id="UPA00143"/>
<dbReference type="PRO" id="PR:Q8LPQ5"/>
<dbReference type="Proteomes" id="UP000006548">
    <property type="component" value="Chromosome 3"/>
</dbReference>
<dbReference type="ExpressionAtlas" id="Q8LPQ5">
    <property type="expression patterns" value="baseline and differential"/>
</dbReference>
<dbReference type="GO" id="GO:0016020">
    <property type="term" value="C:membrane"/>
    <property type="evidence" value="ECO:0007669"/>
    <property type="project" value="UniProtKB-SubCell"/>
</dbReference>
<dbReference type="GO" id="GO:0005634">
    <property type="term" value="C:nucleus"/>
    <property type="evidence" value="ECO:0000314"/>
    <property type="project" value="UniProtKB"/>
</dbReference>
<dbReference type="GO" id="GO:0005506">
    <property type="term" value="F:iron ion binding"/>
    <property type="evidence" value="ECO:0000314"/>
    <property type="project" value="UniProtKB"/>
</dbReference>
<dbReference type="GO" id="GO:0016874">
    <property type="term" value="F:ligase activity"/>
    <property type="evidence" value="ECO:0007669"/>
    <property type="project" value="UniProtKB-KW"/>
</dbReference>
<dbReference type="GO" id="GO:0061630">
    <property type="term" value="F:ubiquitin protein ligase activity"/>
    <property type="evidence" value="ECO:0000314"/>
    <property type="project" value="UniProtKB"/>
</dbReference>
<dbReference type="GO" id="GO:0008270">
    <property type="term" value="F:zinc ion binding"/>
    <property type="evidence" value="ECO:0000314"/>
    <property type="project" value="UniProtKB"/>
</dbReference>
<dbReference type="GO" id="GO:0071456">
    <property type="term" value="P:cellular response to hypoxia"/>
    <property type="evidence" value="ECO:0007007"/>
    <property type="project" value="TAIR"/>
</dbReference>
<dbReference type="GO" id="GO:0010106">
    <property type="term" value="P:cellular response to iron ion starvation"/>
    <property type="evidence" value="ECO:0000315"/>
    <property type="project" value="UniProtKB"/>
</dbReference>
<dbReference type="GO" id="GO:0060586">
    <property type="term" value="P:multicellular organismal-level iron ion homeostasis"/>
    <property type="evidence" value="ECO:0000315"/>
    <property type="project" value="UniProtKB"/>
</dbReference>
<dbReference type="GO" id="GO:0016567">
    <property type="term" value="P:protein ubiquitination"/>
    <property type="evidence" value="ECO:0000314"/>
    <property type="project" value="UniProtKB"/>
</dbReference>
<dbReference type="CDD" id="cd12108">
    <property type="entry name" value="Hr-like"/>
    <property type="match status" value="3"/>
</dbReference>
<dbReference type="CDD" id="cd16464">
    <property type="entry name" value="RING-H2_Pirh2-like"/>
    <property type="match status" value="1"/>
</dbReference>
<dbReference type="FunFam" id="2.20.28.10:FF:000009">
    <property type="entry name" value="RING finger and CHY zinc finger domain-containing protein 1"/>
    <property type="match status" value="1"/>
</dbReference>
<dbReference type="FunFam" id="1.20.120.520:FF:000006">
    <property type="entry name" value="Zinc finger protein BRUTUS"/>
    <property type="match status" value="1"/>
</dbReference>
<dbReference type="FunFam" id="3.30.40.10:FF:000208">
    <property type="entry name" value="Zinc finger protein-related isoform 1"/>
    <property type="match status" value="1"/>
</dbReference>
<dbReference type="Gene3D" id="2.20.28.10">
    <property type="match status" value="1"/>
</dbReference>
<dbReference type="Gene3D" id="1.20.120.520">
    <property type="entry name" value="nmb1532 protein domain like"/>
    <property type="match status" value="3"/>
</dbReference>
<dbReference type="Gene3D" id="3.30.40.10">
    <property type="entry name" value="Zinc/RING finger domain, C3HC4 (zinc finger)"/>
    <property type="match status" value="1"/>
</dbReference>
<dbReference type="InterPro" id="IPR012312">
    <property type="entry name" value="Hemerythrin-like"/>
</dbReference>
<dbReference type="InterPro" id="IPR039512">
    <property type="entry name" value="RCHY1_zinc-ribbon"/>
</dbReference>
<dbReference type="InterPro" id="IPR008913">
    <property type="entry name" value="Znf_CHY"/>
</dbReference>
<dbReference type="InterPro" id="IPR037274">
    <property type="entry name" value="Znf_CHY_sf"/>
</dbReference>
<dbReference type="InterPro" id="IPR017921">
    <property type="entry name" value="Znf_CTCHY"/>
</dbReference>
<dbReference type="InterPro" id="IPR037275">
    <property type="entry name" value="Znf_CTCHY_sf"/>
</dbReference>
<dbReference type="InterPro" id="IPR001841">
    <property type="entry name" value="Znf_RING"/>
</dbReference>
<dbReference type="InterPro" id="IPR013083">
    <property type="entry name" value="Znf_RING/FYVE/PHD"/>
</dbReference>
<dbReference type="PANTHER" id="PTHR21319">
    <property type="entry name" value="RING FINGER AND CHY ZINC FINGER DOMAIN-CONTAINING PROTEIN 1"/>
    <property type="match status" value="1"/>
</dbReference>
<dbReference type="PANTHER" id="PTHR21319:SF61">
    <property type="entry name" value="ZINC FINGER PROTEIN BRUTUS"/>
    <property type="match status" value="1"/>
</dbReference>
<dbReference type="Pfam" id="PF01814">
    <property type="entry name" value="Hemerythrin"/>
    <property type="match status" value="2"/>
</dbReference>
<dbReference type="Pfam" id="PF05495">
    <property type="entry name" value="zf-CHY"/>
    <property type="match status" value="1"/>
</dbReference>
<dbReference type="Pfam" id="PF13639">
    <property type="entry name" value="zf-RING_2"/>
    <property type="match status" value="1"/>
</dbReference>
<dbReference type="Pfam" id="PF14599">
    <property type="entry name" value="zinc_ribbon_6"/>
    <property type="match status" value="1"/>
</dbReference>
<dbReference type="SMART" id="SM00184">
    <property type="entry name" value="RING"/>
    <property type="match status" value="1"/>
</dbReference>
<dbReference type="SUPFAM" id="SSF161219">
    <property type="entry name" value="CHY zinc finger-like"/>
    <property type="match status" value="1"/>
</dbReference>
<dbReference type="SUPFAM" id="SSF57850">
    <property type="entry name" value="RING/U-box"/>
    <property type="match status" value="1"/>
</dbReference>
<dbReference type="SUPFAM" id="SSF161245">
    <property type="entry name" value="Zinc hairpin stack"/>
    <property type="match status" value="1"/>
</dbReference>
<dbReference type="PROSITE" id="PS51266">
    <property type="entry name" value="ZF_CHY"/>
    <property type="match status" value="1"/>
</dbReference>
<dbReference type="PROSITE" id="PS51270">
    <property type="entry name" value="ZF_CTCHY"/>
    <property type="match status" value="1"/>
</dbReference>
<dbReference type="PROSITE" id="PS50089">
    <property type="entry name" value="ZF_RING_2"/>
    <property type="match status" value="1"/>
</dbReference>
<proteinExistence type="evidence at protein level"/>
<accession>Q8LPQ5</accession>
<accession>Q0WL18</accession>
<accession>Q9LJQ1</accession>
<evidence type="ECO:0000255" key="1"/>
<evidence type="ECO:0000255" key="2">
    <source>
        <dbReference type="PROSITE-ProRule" id="PRU00175"/>
    </source>
</evidence>
<evidence type="ECO:0000255" key="3">
    <source>
        <dbReference type="PROSITE-ProRule" id="PRU00601"/>
    </source>
</evidence>
<evidence type="ECO:0000255" key="4">
    <source>
        <dbReference type="PROSITE-ProRule" id="PRU00965"/>
    </source>
</evidence>
<evidence type="ECO:0000256" key="5">
    <source>
        <dbReference type="SAM" id="MobiDB-lite"/>
    </source>
</evidence>
<evidence type="ECO:0000269" key="6">
    <source>
    </source>
</evidence>
<evidence type="ECO:0000269" key="7">
    <source>
    </source>
</evidence>
<evidence type="ECO:0000269" key="8">
    <source>
    </source>
</evidence>
<evidence type="ECO:0000269" key="9">
    <source>
    </source>
</evidence>
<evidence type="ECO:0000269" key="10">
    <source>
    </source>
</evidence>
<evidence type="ECO:0000303" key="11">
    <source>
    </source>
</evidence>
<evidence type="ECO:0000305" key="12"/>
<evidence type="ECO:0000312" key="13">
    <source>
        <dbReference type="Araport" id="AT3G18290"/>
    </source>
</evidence>
<evidence type="ECO:0000312" key="14">
    <source>
        <dbReference type="EMBL" id="BAB01179.1"/>
    </source>
</evidence>
<gene>
    <name evidence="11" type="primary">BTS</name>
    <name evidence="11" type="synonym">EMB2454</name>
    <name evidence="13" type="ordered locus">At3g18290</name>
    <name evidence="14" type="ORF">MIE15.8</name>
</gene>
<comment type="function">
    <text evidence="6 7 8 9 10 11">Essential protein (PubMed:20675571, PubMed:25452667). Negatively regulates the response to iron deficiency and thus contributes to iron homeostasis (PubMed:20675571, PubMed:25794933). Exhibits E3 ubiquitin-protein ligase activity in vitro (PubMed:24253678, PubMed:25452667). Plays a role in root growth, rhizosphere acidification, and iron reductase activity in response to iron deprivation (PubMed:25452667, PubMed:27359166). Facilitates 26S proteasome-mediated degradation of PYEL proteins in the absence of iron (PubMed:25452667).</text>
</comment>
<comment type="pathway">
    <text evidence="12">Protein modification; protein ubiquitination.</text>
</comment>
<comment type="subunit">
    <text evidence="6 7 8">Interacts with the PYEL proteins bHLH115, bHLH104 and ILR3 in the nucleus (PubMed:20675571, PubMed:25452667). Binds zinc and iron ions (PubMed:24253678, PubMed:25452667).</text>
</comment>
<comment type="subcellular location">
    <subcellularLocation>
        <location evidence="1">Membrane</location>
        <topology evidence="1">Single-pass membrane protein</topology>
    </subcellularLocation>
    <subcellularLocation>
        <location evidence="7 8">Nucleus</location>
    </subcellularLocation>
</comment>
<comment type="tissue specificity">
    <text evidence="8">Expressed in cotyledons of seedlings, young leaves, developing and mature embryos, and other reproductive tissues including floral vasculature, funiculus, septum, and gynoecium valves.</text>
</comment>
<comment type="induction">
    <text evidence="6 8">By iron deficiency, specifically in the root vasculature (e.g. pericycle) (PubMed:20675571, PubMed:25452667). Destabilized upon iron-binding (PubMed:25452667).</text>
</comment>
<comment type="disruption phenotype">
    <text evidence="6 8 9 10 11">Embryonic lethal (PubMed:20675571, PubMed:25452667). Increased tolerance to iron deprivation (PubMed:20675571, PubMed:25794933, PubMed:27359166). Over-accumulation of iron ions in phloems, rosette leaves, flowers and seeds. In normal conditions, at the late reproductive stage, aborted siliques and abnormal necrotic lesions in cauline leaves (PubMed:25794933). Increased root elongation, rhizosphere acidification, and iron reductase activity under iron deficiency (PubMed:25452667, PubMed:27359166).</text>
</comment>
<comment type="sequence caution" evidence="12">
    <conflict type="erroneous gene model prediction">
        <sequence resource="EMBL-CDS" id="BAB01179"/>
    </conflict>
</comment>
<organism>
    <name type="scientific">Arabidopsis thaliana</name>
    <name type="common">Mouse-ear cress</name>
    <dbReference type="NCBI Taxonomy" id="3702"/>
    <lineage>
        <taxon>Eukaryota</taxon>
        <taxon>Viridiplantae</taxon>
        <taxon>Streptophyta</taxon>
        <taxon>Embryophyta</taxon>
        <taxon>Tracheophyta</taxon>
        <taxon>Spermatophyta</taxon>
        <taxon>Magnoliopsida</taxon>
        <taxon>eudicotyledons</taxon>
        <taxon>Gunneridae</taxon>
        <taxon>Pentapetalae</taxon>
        <taxon>rosids</taxon>
        <taxon>malvids</taxon>
        <taxon>Brassicales</taxon>
        <taxon>Brassicaceae</taxon>
        <taxon>Camelineae</taxon>
        <taxon>Arabidopsis</taxon>
    </lineage>
</organism>
<name>BTS_ARATH</name>
<protein>
    <recommendedName>
        <fullName evidence="11">Zinc finger protein BRUTUS</fullName>
    </recommendedName>
    <alternativeName>
        <fullName evidence="11">Protein EMBRYO DEFECTIVE 2454</fullName>
    </alternativeName>
</protein>
<reference key="1">
    <citation type="journal article" date="2000" name="DNA Res.">
        <title>Structural analysis of Arabidopsis thaliana chromosome 3. II. Sequence features of the 4,251,695 bp regions covered by 90 P1, TAC and BAC clones.</title>
        <authorList>
            <person name="Kaneko T."/>
            <person name="Katoh T."/>
            <person name="Sato S."/>
            <person name="Nakamura Y."/>
            <person name="Asamizu E."/>
            <person name="Tabata S."/>
        </authorList>
    </citation>
    <scope>NUCLEOTIDE SEQUENCE [LARGE SCALE GENOMIC DNA]</scope>
    <source>
        <strain>cv. Columbia</strain>
    </source>
</reference>
<reference key="2">
    <citation type="journal article" date="2017" name="Plant J.">
        <title>Araport11: a complete reannotation of the Arabidopsis thaliana reference genome.</title>
        <authorList>
            <person name="Cheng C.Y."/>
            <person name="Krishnakumar V."/>
            <person name="Chan A.P."/>
            <person name="Thibaud-Nissen F."/>
            <person name="Schobel S."/>
            <person name="Town C.D."/>
        </authorList>
    </citation>
    <scope>GENOME REANNOTATION</scope>
    <source>
        <strain>cv. Columbia</strain>
    </source>
</reference>
<reference key="3">
    <citation type="journal article" date="2003" name="Science">
        <title>Empirical analysis of transcriptional activity in the Arabidopsis genome.</title>
        <authorList>
            <person name="Yamada K."/>
            <person name="Lim J."/>
            <person name="Dale J.M."/>
            <person name="Chen H."/>
            <person name="Shinn P."/>
            <person name="Palm C.J."/>
            <person name="Southwick A.M."/>
            <person name="Wu H.C."/>
            <person name="Kim C.J."/>
            <person name="Nguyen M."/>
            <person name="Pham P.K."/>
            <person name="Cheuk R.F."/>
            <person name="Karlin-Newmann G."/>
            <person name="Liu S.X."/>
            <person name="Lam B."/>
            <person name="Sakano H."/>
            <person name="Wu T."/>
            <person name="Yu G."/>
            <person name="Miranda M."/>
            <person name="Quach H.L."/>
            <person name="Tripp M."/>
            <person name="Chang C.H."/>
            <person name="Lee J.M."/>
            <person name="Toriumi M.J."/>
            <person name="Chan M.M."/>
            <person name="Tang C.C."/>
            <person name="Onodera C.S."/>
            <person name="Deng J.M."/>
            <person name="Akiyama K."/>
            <person name="Ansari Y."/>
            <person name="Arakawa T."/>
            <person name="Banh J."/>
            <person name="Banno F."/>
            <person name="Bowser L."/>
            <person name="Brooks S.Y."/>
            <person name="Carninci P."/>
            <person name="Chao Q."/>
            <person name="Choy N."/>
            <person name="Enju A."/>
            <person name="Goldsmith A.D."/>
            <person name="Gurjal M."/>
            <person name="Hansen N.F."/>
            <person name="Hayashizaki Y."/>
            <person name="Johnson-Hopson C."/>
            <person name="Hsuan V.W."/>
            <person name="Iida K."/>
            <person name="Karnes M."/>
            <person name="Khan S."/>
            <person name="Koesema E."/>
            <person name="Ishida J."/>
            <person name="Jiang P.X."/>
            <person name="Jones T."/>
            <person name="Kawai J."/>
            <person name="Kamiya A."/>
            <person name="Meyers C."/>
            <person name="Nakajima M."/>
            <person name="Narusaka M."/>
            <person name="Seki M."/>
            <person name="Sakurai T."/>
            <person name="Satou M."/>
            <person name="Tamse R."/>
            <person name="Vaysberg M."/>
            <person name="Wallender E.K."/>
            <person name="Wong C."/>
            <person name="Yamamura Y."/>
            <person name="Yuan S."/>
            <person name="Shinozaki K."/>
            <person name="Davis R.W."/>
            <person name="Theologis A."/>
            <person name="Ecker J.R."/>
        </authorList>
    </citation>
    <scope>NUCLEOTIDE SEQUENCE [LARGE SCALE MRNA]</scope>
    <source>
        <strain>cv. Columbia</strain>
    </source>
</reference>
<reference key="4">
    <citation type="submission" date="2006-07" db="EMBL/GenBank/DDBJ databases">
        <title>Large-scale analysis of RIKEN Arabidopsis full-length (RAFL) cDNAs.</title>
        <authorList>
            <person name="Totoki Y."/>
            <person name="Seki M."/>
            <person name="Ishida J."/>
            <person name="Nakajima M."/>
            <person name="Enju A."/>
            <person name="Kamiya A."/>
            <person name="Narusaka M."/>
            <person name="Shin-i T."/>
            <person name="Nakagawa M."/>
            <person name="Sakamoto N."/>
            <person name="Oishi K."/>
            <person name="Kohara Y."/>
            <person name="Kobayashi M."/>
            <person name="Toyoda A."/>
            <person name="Sakaki Y."/>
            <person name="Sakurai T."/>
            <person name="Iida K."/>
            <person name="Akiyama K."/>
            <person name="Satou M."/>
            <person name="Toyoda T."/>
            <person name="Konagaya A."/>
            <person name="Carninci P."/>
            <person name="Kawai J."/>
            <person name="Hayashizaki Y."/>
            <person name="Shinozaki K."/>
        </authorList>
    </citation>
    <scope>NUCLEOTIDE SEQUENCE [LARGE SCALE MRNA] OF 768-1254</scope>
    <source>
        <strain>cv. Columbia</strain>
    </source>
</reference>
<reference key="5">
    <citation type="journal article" date="2010" name="Plant Cell">
        <title>The bHLH transcription factor POPEYE regulates response to iron deficiency in Arabidopsis roots.</title>
        <authorList>
            <person name="Long T.A."/>
            <person name="Tsukagoshi H."/>
            <person name="Busch W."/>
            <person name="Lahner B."/>
            <person name="Salt D.E."/>
            <person name="Benfey P.N."/>
        </authorList>
    </citation>
    <scope>FUNCTION</scope>
    <scope>DISRUPTION PHENOTYPE</scope>
    <scope>INTERACTION WITH BHLH115; BHLH104 AND ILR3</scope>
    <scope>INDUCTION BY IRON DEFICIENCY</scope>
    <source>
        <strain>cv. Columbia</strain>
    </source>
</reference>
<reference key="6">
    <citation type="journal article" date="2013" name="Nat. Commun.">
        <title>Iron-binding haemerythrin RING ubiquitin ligases regulate plant iron responses and accumulation.</title>
        <authorList>
            <person name="Kobayashi T."/>
            <person name="Nagasaka S."/>
            <person name="Senoura T."/>
            <person name="Itai R.N."/>
            <person name="Nakanishi H."/>
            <person name="Nishizawa N.K."/>
        </authorList>
    </citation>
    <scope>FUNCTION</scope>
    <scope>SUBCELLULAR LOCATION</scope>
    <scope>INTERACTION WITH ZINC AND IRON IONS</scope>
</reference>
<reference key="7">
    <citation type="journal article" date="2015" name="Plant Cell">
        <title>The bHLH transcription factor bHLH104 interacts with IAA-LEUCINE RESISTANT3 and modulates iron homeostasis in Arabidopsis.</title>
        <authorList>
            <person name="Zhang J."/>
            <person name="Liu B."/>
            <person name="Li M."/>
            <person name="Feng D."/>
            <person name="Jin H."/>
            <person name="Wang P."/>
            <person name="Liu J."/>
            <person name="Xiong F."/>
            <person name="Wang J."/>
            <person name="Wang H.-B."/>
        </authorList>
    </citation>
    <scope>FUNCTION</scope>
    <scope>DISRUPTION PHENOTYPE</scope>
</reference>
<reference key="8">
    <citation type="journal article" date="2015" name="Plant Physiol.">
        <title>Iron-binding E3 ligase mediates iron response in plants by targeting basic helix-loop-helix transcription factors.</title>
        <authorList>
            <person name="Selote D."/>
            <person name="Samira R."/>
            <person name="Matthiadis A."/>
            <person name="Gillikin J.W."/>
            <person name="Long T.A."/>
        </authorList>
    </citation>
    <scope>FUNCTION</scope>
    <scope>DISRUPTION PHENOTYPE</scope>
    <scope>MUTAGENESIS OF GLU-108; GLU-369 AND GLU-716</scope>
    <scope>TISSUE SPECIFICITY</scope>
    <scope>SUBCELLULAR LOCATION</scope>
    <scope>INTERACTION WITH BHLH115; BHLH104 AND ILR3</scope>
    <scope>INDUCTION BY IRON DEFICIENCY</scope>
    <scope>INTERACTION WITH ZINC AND IRON IONS</scope>
    <source>
        <strain>cv. Columbia</strain>
    </source>
</reference>
<reference key="9">
    <citation type="journal article" date="2016" name="Plant Signal. Behav.">
        <title>Further insight into BRUTUS domain composition and functionality.</title>
        <authorList>
            <person name="Matthiadis A."/>
            <person name="Long T.A."/>
        </authorList>
    </citation>
    <scope>FUNCTION</scope>
    <scope>DISRUPTION PHENOTYPE</scope>
</reference>
<feature type="chain" id="PRO_0000437680" description="Zinc finger protein BRUTUS">
    <location>
        <begin position="1"/>
        <end position="1254"/>
    </location>
</feature>
<feature type="transmembrane region" description="Helical" evidence="1">
    <location>
        <begin position="201"/>
        <end position="221"/>
    </location>
</feature>
<feature type="zinc finger region" description="CHY-type" evidence="3">
    <location>
        <begin position="999"/>
        <end position="1068"/>
    </location>
</feature>
<feature type="zinc finger region" description="CTCHY-type" evidence="4">
    <location>
        <begin position="1071"/>
        <end position="1134"/>
    </location>
</feature>
<feature type="zinc finger region" description="RING-type; atypical" evidence="2">
    <location>
        <begin position="1135"/>
        <end position="1176"/>
    </location>
</feature>
<feature type="region of interest" description="Disordered" evidence="5">
    <location>
        <begin position="1"/>
        <end position="40"/>
    </location>
</feature>
<feature type="region of interest" description="Disordered" evidence="5">
    <location>
        <begin position="893"/>
        <end position="913"/>
    </location>
</feature>
<feature type="compositionally biased region" description="Low complexity" evidence="5">
    <location>
        <begin position="19"/>
        <end position="40"/>
    </location>
</feature>
<feature type="compositionally biased region" description="Polar residues" evidence="5">
    <location>
        <begin position="895"/>
        <end position="906"/>
    </location>
</feature>
<feature type="binding site" evidence="3">
    <location>
        <position position="1006"/>
    </location>
    <ligand>
        <name>Zn(2+)</name>
        <dbReference type="ChEBI" id="CHEBI:29105"/>
        <label>1</label>
    </ligand>
</feature>
<feature type="binding site" evidence="3">
    <location>
        <position position="1008"/>
    </location>
    <ligand>
        <name>Zn(2+)</name>
        <dbReference type="ChEBI" id="CHEBI:29105"/>
        <label>1</label>
    </ligand>
</feature>
<feature type="binding site" evidence="3">
    <location>
        <position position="1019"/>
    </location>
    <ligand>
        <name>Zn(2+)</name>
        <dbReference type="ChEBI" id="CHEBI:29105"/>
        <label>2</label>
    </ligand>
</feature>
<feature type="binding site" evidence="3">
    <location>
        <position position="1020"/>
    </location>
    <ligand>
        <name>Zn(2+)</name>
        <dbReference type="ChEBI" id="CHEBI:29105"/>
        <label>2</label>
    </ligand>
</feature>
<feature type="binding site" evidence="3">
    <location>
        <position position="1026"/>
    </location>
    <ligand>
        <name>Zn(2+)</name>
        <dbReference type="ChEBI" id="CHEBI:29105"/>
        <label>1</label>
    </ligand>
</feature>
<feature type="binding site" evidence="3">
    <location>
        <position position="1029"/>
    </location>
    <ligand>
        <name>Zn(2+)</name>
        <dbReference type="ChEBI" id="CHEBI:29105"/>
        <label>1</label>
    </ligand>
</feature>
<feature type="binding site" evidence="3">
    <location>
        <position position="1030"/>
    </location>
    <ligand>
        <name>Zn(2+)</name>
        <dbReference type="ChEBI" id="CHEBI:29105"/>
        <label>2</label>
    </ligand>
</feature>
<feature type="binding site" evidence="3">
    <location>
        <position position="1036"/>
    </location>
    <ligand>
        <name>Zn(2+)</name>
        <dbReference type="ChEBI" id="CHEBI:29105"/>
        <label>2</label>
    </ligand>
</feature>
<feature type="binding site" evidence="3">
    <location>
        <position position="1048"/>
    </location>
    <ligand>
        <name>Zn(2+)</name>
        <dbReference type="ChEBI" id="CHEBI:29105"/>
        <label>3</label>
    </ligand>
</feature>
<feature type="binding site" evidence="3">
    <location>
        <position position="1051"/>
    </location>
    <ligand>
        <name>Zn(2+)</name>
        <dbReference type="ChEBI" id="CHEBI:29105"/>
        <label>3</label>
    </ligand>
</feature>
<feature type="binding site" evidence="3">
    <location>
        <position position="1061"/>
    </location>
    <ligand>
        <name>Zn(2+)</name>
        <dbReference type="ChEBI" id="CHEBI:29105"/>
        <label>3</label>
    </ligand>
</feature>
<feature type="binding site" evidence="3">
    <location>
        <position position="1066"/>
    </location>
    <ligand>
        <name>Zn(2+)</name>
        <dbReference type="ChEBI" id="CHEBI:29105"/>
        <label>3</label>
    </ligand>
</feature>
<feature type="binding site" evidence="4">
    <location>
        <position position="1076"/>
    </location>
    <ligand>
        <name>Zn(2+)</name>
        <dbReference type="ChEBI" id="CHEBI:29105"/>
        <label>4</label>
    </ligand>
</feature>
<feature type="binding site" evidence="4">
    <location>
        <position position="1079"/>
    </location>
    <ligand>
        <name>Zn(2+)</name>
        <dbReference type="ChEBI" id="CHEBI:29105"/>
        <label>4</label>
    </ligand>
</feature>
<feature type="binding site" evidence="4">
    <location>
        <position position="1090"/>
    </location>
    <ligand>
        <name>Zn(2+)</name>
        <dbReference type="ChEBI" id="CHEBI:29105"/>
        <label>4</label>
    </ligand>
</feature>
<feature type="binding site" evidence="4">
    <location>
        <position position="1091"/>
    </location>
    <ligand>
        <name>Zn(2+)</name>
        <dbReference type="ChEBI" id="CHEBI:29105"/>
        <label>5</label>
    </ligand>
</feature>
<feature type="binding site" evidence="4">
    <location>
        <position position="1094"/>
    </location>
    <ligand>
        <name>Zn(2+)</name>
        <dbReference type="ChEBI" id="CHEBI:29105"/>
        <label>5</label>
    </ligand>
</feature>
<feature type="binding site" evidence="4">
    <location>
        <position position="1097"/>
    </location>
    <ligand>
        <name>Zn(2+)</name>
        <dbReference type="ChEBI" id="CHEBI:29105"/>
        <label>4</label>
    </ligand>
</feature>
<feature type="binding site" evidence="4">
    <location>
        <position position="1109"/>
    </location>
    <ligand>
        <name>Zn(2+)</name>
        <dbReference type="ChEBI" id="CHEBI:29105"/>
        <label>5</label>
    </ligand>
</feature>
<feature type="binding site" evidence="4">
    <location>
        <position position="1110"/>
    </location>
    <ligand>
        <name>Zn(2+)</name>
        <dbReference type="ChEBI" id="CHEBI:29105"/>
        <label>6</label>
    </ligand>
</feature>
<feature type="binding site" evidence="4">
    <location>
        <position position="1113"/>
    </location>
    <ligand>
        <name>Zn(2+)</name>
        <dbReference type="ChEBI" id="CHEBI:29105"/>
        <label>6</label>
    </ligand>
</feature>
<feature type="binding site" evidence="4">
    <location>
        <position position="1116"/>
    </location>
    <ligand>
        <name>Zn(2+)</name>
        <dbReference type="ChEBI" id="CHEBI:29105"/>
        <label>5</label>
    </ligand>
</feature>
<feature type="binding site" evidence="4">
    <location>
        <position position="1124"/>
    </location>
    <ligand>
        <name>Zn(2+)</name>
        <dbReference type="ChEBI" id="CHEBI:29105"/>
        <label>6</label>
    </ligand>
</feature>
<feature type="binding site" evidence="4">
    <location>
        <position position="1126"/>
    </location>
    <ligand>
        <name>Zn(2+)</name>
        <dbReference type="ChEBI" id="CHEBI:29105"/>
        <label>6</label>
    </ligand>
</feature>
<feature type="site" description="Required for iron-dependent instability" evidence="8">
    <location>
        <position position="108"/>
    </location>
</feature>
<feature type="site" description="Required for iron-dependent instability" evidence="8">
    <location>
        <position position="369"/>
    </location>
</feature>
<feature type="mutagenesis site" description="Loss of sensitivity to iron." evidence="8">
    <original>E</original>
    <variation>A</variation>
    <location>
        <position position="108"/>
    </location>
</feature>
<feature type="mutagenesis site" description="Loss of sensitivity to iron." evidence="8">
    <original>E</original>
    <variation>A</variation>
    <location>
        <position position="369"/>
    </location>
</feature>
<feature type="mutagenesis site" description="Normal sensitivity to iron." evidence="8">
    <original>E</original>
    <variation>A</variation>
    <location>
        <position position="716"/>
    </location>
</feature>